<sequence length="369" mass="41349">MMTEAQGPVVSIGSATVTYDHPPIISPVSYPKARPTQILDIRKRTSRIDLYHEILAGLRAKDKELPSLLLWNDRGLDLFSEILNSDEYYPRRRETQLLQTHVNEFTRSISSGERLIELGAGNLQKTVSVLRCLEQSRKHVEYCALDVSHAALQASITELKAQLPFASYVTIRGLLGTYNDCASWLKQSGATVRTTFLWLGNSIANFEPEDATSILADFLQTKASPSHSPQMIIAVDGCQDVEQILEAYDMPNKLSQKFVFNGLSHANQILGSEVFRPQHWTFEGKWNPVKSMHESFYVAKKPMSLDIGNERFHVHAGEKIRAITSGKWPKDKVTSICQSAGIKVLKGWTDEEGSYGKRVTQVYSRGSSC</sequence>
<dbReference type="EC" id="2.1.1.-" evidence="4"/>
<dbReference type="EMBL" id="EQ963479">
    <property type="protein sequence ID" value="EED49607.1"/>
    <property type="molecule type" value="Genomic_DNA"/>
</dbReference>
<dbReference type="RefSeq" id="XP_002379988.1">
    <property type="nucleotide sequence ID" value="XM_002379947.1"/>
</dbReference>
<dbReference type="SMR" id="B8NI23"/>
<dbReference type="STRING" id="332952.B8NI23"/>
<dbReference type="EnsemblFungi" id="EED49607">
    <property type="protein sequence ID" value="EED49607"/>
    <property type="gene ID" value="AFLA_064280"/>
</dbReference>
<dbReference type="VEuPathDB" id="FungiDB:AFLA_008362"/>
<dbReference type="eggNOG" id="ENOG502SQAU">
    <property type="taxonomic scope" value="Eukaryota"/>
</dbReference>
<dbReference type="HOGENOM" id="CLU_049766_0_2_1"/>
<dbReference type="OMA" id="KYLWDET"/>
<dbReference type="GO" id="GO:0008168">
    <property type="term" value="F:methyltransferase activity"/>
    <property type="evidence" value="ECO:0007669"/>
    <property type="project" value="UniProtKB-KW"/>
</dbReference>
<dbReference type="GO" id="GO:0032259">
    <property type="term" value="P:methylation"/>
    <property type="evidence" value="ECO:0007669"/>
    <property type="project" value="UniProtKB-KW"/>
</dbReference>
<dbReference type="Gene3D" id="3.40.50.150">
    <property type="entry name" value="Vaccinia Virus protein VP39"/>
    <property type="match status" value="1"/>
</dbReference>
<dbReference type="InterPro" id="IPR051128">
    <property type="entry name" value="EgtD_Methyltrsf_superfamily"/>
</dbReference>
<dbReference type="InterPro" id="IPR019257">
    <property type="entry name" value="MeTrfase_dom"/>
</dbReference>
<dbReference type="InterPro" id="IPR017804">
    <property type="entry name" value="MeTrfase_EgtD-like"/>
</dbReference>
<dbReference type="InterPro" id="IPR029063">
    <property type="entry name" value="SAM-dependent_MTases_sf"/>
</dbReference>
<dbReference type="InterPro" id="IPR017805">
    <property type="entry name" value="SAM_MeTrfase_EasF-type_put"/>
</dbReference>
<dbReference type="NCBIfam" id="TIGR03439">
    <property type="entry name" value="methyl_EasF"/>
    <property type="match status" value="1"/>
</dbReference>
<dbReference type="PANTHER" id="PTHR43397">
    <property type="entry name" value="ERGOTHIONEINE BIOSYNTHESIS PROTEIN 1"/>
    <property type="match status" value="1"/>
</dbReference>
<dbReference type="PANTHER" id="PTHR43397:SF2">
    <property type="entry name" value="HISTIDINE-SPECIFIC METHYLTRANSFERASE SAM-DEPENDENT DOMAIN-CONTAINING PROTEIN"/>
    <property type="match status" value="1"/>
</dbReference>
<dbReference type="Pfam" id="PF10017">
    <property type="entry name" value="Methyltransf_33"/>
    <property type="match status" value="1"/>
</dbReference>
<dbReference type="PIRSF" id="PIRSF018005">
    <property type="entry name" value="UCP018005"/>
    <property type="match status" value="1"/>
</dbReference>
<accession>B8NI23</accession>
<keyword id="KW-0489">Methyltransferase</keyword>
<keyword id="KW-0949">S-adenosyl-L-methionine</keyword>
<keyword id="KW-0808">Transferase</keyword>
<gene>
    <name evidence="2" type="primary">imqF</name>
    <name type="ORF">AFLA_064280</name>
</gene>
<proteinExistence type="evidence at transcript level"/>
<protein>
    <recommendedName>
        <fullName evidence="2">N-methyltransferase imqF</fullName>
        <ecNumber evidence="4">2.1.1.-</ecNumber>
    </recommendedName>
    <alternativeName>
        <fullName evidence="2">Imizoquin biosynthesis cluster protein F</fullName>
    </alternativeName>
</protein>
<comment type="function">
    <text evidence="1">N-methyltransferase; part of the gene cluster that mediates the biosynthesis of imizoquins A to D, tripeptide-derived alkaloids that serve a protective role against oxidative stress that are essential for normal germination (PubMed:29182847). ImqB is a canonical three-module NRPS that assembles the tripeptide backbone of the imizoquins via condensation of Trp, Tyr, and Leu-derived precursors (PubMed:29182847). N-methylation by imqF and phenol oxidation by imqC, followed by cyclization via the FAD-dependent oxidase imqH carry out the three-step transformation of L-tyrosine into tetrahydroisoquinoline (PubMed:29182847). Importantly, this sequence requires the presence of a free amine in the tyrosine moiety, indicating that isoquinoline formation occurs prior to peptide bond formation (PubMed:29182847). The imidazolidin-4-one ring of imizoquins could form following additional oxidation of the methyl-derived bridgehead carbon by imqH (PubMed:29182847). Lastly, O-methylation by imqG and leucine hydroxylation by imqE complete biosynthesis of the imizoquins (PubMed:29182847).</text>
</comment>
<comment type="pathway">
    <text evidence="4">Secondary metabolite biosynthesis.</text>
</comment>
<comment type="induction">
    <text evidence="1">Expression is down-regulated by ralstonins, lipopeptides produced by the plant pathogenic bacteria Ralstonia solanacearum (PubMed:29182847). Expression is positively regulated by the imizoquins cluster-specific transcription regulator imqK (PubMed:29182847).</text>
</comment>
<comment type="similarity">
    <text evidence="3">Belongs to the methyltransferase superfamily.</text>
</comment>
<organism>
    <name type="scientific">Aspergillus flavus (strain ATCC 200026 / FGSC A1120 / IAM 13836 / NRRL 3357 / JCM 12722 / SRRC 167)</name>
    <dbReference type="NCBI Taxonomy" id="332952"/>
    <lineage>
        <taxon>Eukaryota</taxon>
        <taxon>Fungi</taxon>
        <taxon>Dikarya</taxon>
        <taxon>Ascomycota</taxon>
        <taxon>Pezizomycotina</taxon>
        <taxon>Eurotiomycetes</taxon>
        <taxon>Eurotiomycetidae</taxon>
        <taxon>Eurotiales</taxon>
        <taxon>Aspergillaceae</taxon>
        <taxon>Aspergillus</taxon>
        <taxon>Aspergillus subgen. Circumdati</taxon>
    </lineage>
</organism>
<name>IMQF_ASPFN</name>
<feature type="chain" id="PRO_0000444538" description="N-methyltransferase imqF">
    <location>
        <begin position="1"/>
        <end position="369"/>
    </location>
</feature>
<reference key="1">
    <citation type="journal article" date="2015" name="Genome Announc.">
        <title>Genome sequence of Aspergillus flavus NRRL 3357, a strain that causes aflatoxin contamination of food and feed.</title>
        <authorList>
            <person name="Nierman W.C."/>
            <person name="Yu J."/>
            <person name="Fedorova-Abrams N.D."/>
            <person name="Losada L."/>
            <person name="Cleveland T.E."/>
            <person name="Bhatnagar D."/>
            <person name="Bennett J.W."/>
            <person name="Dean R."/>
            <person name="Payne G.A."/>
        </authorList>
    </citation>
    <scope>NUCLEOTIDE SEQUENCE [LARGE SCALE GENOMIC DNA]</scope>
    <source>
        <strain>ATCC 200026 / FGSC A1120 / IAM 13836 / NRRL 3357 / JCM 12722 / SRRC 167</strain>
    </source>
</reference>
<reference key="2">
    <citation type="journal article" date="2018" name="ACS Chem. Biol.">
        <title>NRPS-derived isoquinolines and lipopetides mediate antagonism between plant pathogenic fungi and bacteria.</title>
        <authorList>
            <person name="Khalid S."/>
            <person name="Baccile J.A."/>
            <person name="Spraker J.E."/>
            <person name="Tannous J."/>
            <person name="Imran M."/>
            <person name="Schroeder F.C."/>
            <person name="Keller N.P."/>
        </authorList>
    </citation>
    <scope>INDUCTION</scope>
    <scope>FUNCTION</scope>
    <scope>PATHWAY</scope>
</reference>
<evidence type="ECO:0000269" key="1">
    <source>
    </source>
</evidence>
<evidence type="ECO:0000303" key="2">
    <source>
    </source>
</evidence>
<evidence type="ECO:0000305" key="3"/>
<evidence type="ECO:0000305" key="4">
    <source>
    </source>
</evidence>